<geneLocation type="mitochondrion"/>
<dbReference type="EMBL" id="L20934">
    <property type="protein sequence ID" value="AAD12194.1"/>
    <property type="molecule type" value="Genomic_DNA"/>
</dbReference>
<dbReference type="PIR" id="T09804">
    <property type="entry name" value="T09804"/>
</dbReference>
<dbReference type="RefSeq" id="NP_008073.1">
    <property type="nucleotide sequence ID" value="NC_002084.1"/>
</dbReference>
<dbReference type="SMR" id="P34834"/>
<dbReference type="FunCoup" id="P34834">
    <property type="interactions" value="138"/>
</dbReference>
<dbReference type="STRING" id="7165.P34834"/>
<dbReference type="PaxDb" id="7165-AGAP028370-PA"/>
<dbReference type="EnsemblMetazoa" id="AGAP028370-RA">
    <property type="protein sequence ID" value="AGAP028370-PA"/>
    <property type="gene ID" value="AGAP028370"/>
</dbReference>
<dbReference type="VEuPathDB" id="VectorBase:AGAMI1_012540"/>
<dbReference type="VEuPathDB" id="VectorBase:AGAP028370"/>
<dbReference type="eggNOG" id="KOG4665">
    <property type="taxonomic scope" value="Eukaryota"/>
</dbReference>
<dbReference type="HOGENOM" id="CLU_041018_0_2_1"/>
<dbReference type="InParanoid" id="P34834"/>
<dbReference type="OMA" id="FFDQFMS"/>
<dbReference type="Proteomes" id="UP000007062">
    <property type="component" value="Mitochondrion"/>
</dbReference>
<dbReference type="GO" id="GO:0005743">
    <property type="term" value="C:mitochondrial inner membrane"/>
    <property type="evidence" value="ECO:0007669"/>
    <property type="project" value="UniProtKB-SubCell"/>
</dbReference>
<dbReference type="GO" id="GO:0045259">
    <property type="term" value="C:proton-transporting ATP synthase complex"/>
    <property type="evidence" value="ECO:0000318"/>
    <property type="project" value="GO_Central"/>
</dbReference>
<dbReference type="GO" id="GO:0015078">
    <property type="term" value="F:proton transmembrane transporter activity"/>
    <property type="evidence" value="ECO:0007669"/>
    <property type="project" value="InterPro"/>
</dbReference>
<dbReference type="GO" id="GO:0015986">
    <property type="term" value="P:proton motive force-driven ATP synthesis"/>
    <property type="evidence" value="ECO:0000318"/>
    <property type="project" value="GO_Central"/>
</dbReference>
<dbReference type="CDD" id="cd00310">
    <property type="entry name" value="ATP-synt_Fo_a_6"/>
    <property type="match status" value="1"/>
</dbReference>
<dbReference type="FunFam" id="1.20.120.220:FF:000008">
    <property type="entry name" value="ATP synthase subunit a"/>
    <property type="match status" value="1"/>
</dbReference>
<dbReference type="Gene3D" id="1.20.120.220">
    <property type="entry name" value="ATP synthase, F0 complex, subunit A"/>
    <property type="match status" value="1"/>
</dbReference>
<dbReference type="InterPro" id="IPR000568">
    <property type="entry name" value="ATP_synth_F0_asu"/>
</dbReference>
<dbReference type="InterPro" id="IPR023011">
    <property type="entry name" value="ATP_synth_F0_asu_AS"/>
</dbReference>
<dbReference type="InterPro" id="IPR045083">
    <property type="entry name" value="ATP_synth_F0_asu_bact/mt"/>
</dbReference>
<dbReference type="InterPro" id="IPR035908">
    <property type="entry name" value="F0_ATP_A_sf"/>
</dbReference>
<dbReference type="NCBIfam" id="TIGR01131">
    <property type="entry name" value="ATP_synt_6_or_A"/>
    <property type="match status" value="1"/>
</dbReference>
<dbReference type="PANTHER" id="PTHR11410">
    <property type="entry name" value="ATP SYNTHASE SUBUNIT A"/>
    <property type="match status" value="1"/>
</dbReference>
<dbReference type="PANTHER" id="PTHR11410:SF0">
    <property type="entry name" value="ATP SYNTHASE SUBUNIT A"/>
    <property type="match status" value="1"/>
</dbReference>
<dbReference type="Pfam" id="PF00119">
    <property type="entry name" value="ATP-synt_A"/>
    <property type="match status" value="1"/>
</dbReference>
<dbReference type="PRINTS" id="PR00123">
    <property type="entry name" value="ATPASEA"/>
</dbReference>
<dbReference type="SUPFAM" id="SSF81336">
    <property type="entry name" value="F1F0 ATP synthase subunit A"/>
    <property type="match status" value="1"/>
</dbReference>
<dbReference type="PROSITE" id="PS00449">
    <property type="entry name" value="ATPASE_A"/>
    <property type="match status" value="1"/>
</dbReference>
<comment type="function">
    <text>Mitochondrial membrane ATP synthase (F(1)F(0) ATP synthase or Complex V) produces ATP from ADP in the presence of a proton gradient across the membrane which is generated by electron transport complexes of the respiratory chain. F-type ATPases consist of two structural domains, F(1) - containing the extramembraneous catalytic core and F(0) - containing the membrane proton channel, linked together by a central stalk and a peripheral stalk. During catalysis, ATP synthesis in the catalytic domain of F(1) is coupled via a rotary mechanism of the central stalk subunits to proton translocation. Key component of the proton channel; it may play a direct role in the translocation of protons across the membrane.</text>
</comment>
<comment type="subunit">
    <text>F-type ATPases have 2 components, CF(1) - the catalytic core - and CF(0) - the membrane proton channel. CF(1) has five subunits: alpha(3), beta(3), gamma(1), delta(1), epsilon(1). CF(0) has three main subunits: a, b and c.</text>
</comment>
<comment type="subcellular location">
    <subcellularLocation>
        <location>Mitochondrion inner membrane</location>
        <topology>Multi-pass membrane protein</topology>
    </subcellularLocation>
</comment>
<comment type="similarity">
    <text evidence="2">Belongs to the ATPase A chain family.</text>
</comment>
<accession>P34834</accession>
<organism>
    <name type="scientific">Anopheles gambiae</name>
    <name type="common">African malaria mosquito</name>
    <dbReference type="NCBI Taxonomy" id="7165"/>
    <lineage>
        <taxon>Eukaryota</taxon>
        <taxon>Metazoa</taxon>
        <taxon>Ecdysozoa</taxon>
        <taxon>Arthropoda</taxon>
        <taxon>Hexapoda</taxon>
        <taxon>Insecta</taxon>
        <taxon>Pterygota</taxon>
        <taxon>Neoptera</taxon>
        <taxon>Endopterygota</taxon>
        <taxon>Diptera</taxon>
        <taxon>Nematocera</taxon>
        <taxon>Culicoidea</taxon>
        <taxon>Culicidae</taxon>
        <taxon>Anophelinae</taxon>
        <taxon>Anopheles</taxon>
    </lineage>
</organism>
<keyword id="KW-0066">ATP synthesis</keyword>
<keyword id="KW-0138">CF(0)</keyword>
<keyword id="KW-0375">Hydrogen ion transport</keyword>
<keyword id="KW-0406">Ion transport</keyword>
<keyword id="KW-0472">Membrane</keyword>
<keyword id="KW-0496">Mitochondrion</keyword>
<keyword id="KW-0999">Mitochondrion inner membrane</keyword>
<keyword id="KW-1185">Reference proteome</keyword>
<keyword id="KW-0812">Transmembrane</keyword>
<keyword id="KW-1133">Transmembrane helix</keyword>
<keyword id="KW-0813">Transport</keyword>
<name>ATP6_ANOGA</name>
<reference key="1">
    <citation type="journal article" date="1993" name="Insect Mol. Biol.">
        <title>The mitochondrial genome of the mosquito Anopheles gambiae: DNA sequence, genome organization, and comparisons with mitochondrial sequences of other insects.</title>
        <authorList>
            <person name="Beard C.B."/>
            <person name="Hamm D.M."/>
            <person name="Collins F.H."/>
        </authorList>
    </citation>
    <scope>NUCLEOTIDE SEQUENCE [LARGE SCALE GENOMIC DNA]</scope>
    <source>
        <strain>G3</strain>
    </source>
</reference>
<evidence type="ECO:0000255" key="1"/>
<evidence type="ECO:0000305" key="2"/>
<gene>
    <name type="primary">mt:ATPase6</name>
    <name type="synonym">ATP6</name>
</gene>
<sequence>MMTNLFSVFDPSTTILNLSLNWLSTFLGLFLIPVSYWLMPNRFQVIWNNILLTLHKEFKTLLGPSGHNGSTLMFISLFSLIMFNNFLGLFPYIFTSTSHLTLTLALAFPLWLSFMLYGWINHTQHMFAHLVPQGTPPVLMPFMVCIETISNVIRPGTLAVRLTANMIAGHLLLTLLGNTGPMASNYLILSLILTTQIALLVLESAVAIIQSYVFAVLSTLYSSEVN</sequence>
<protein>
    <recommendedName>
        <fullName>ATP synthase subunit a</fullName>
    </recommendedName>
    <alternativeName>
        <fullName>F-ATPase protein 6</fullName>
    </alternativeName>
</protein>
<proteinExistence type="inferred from homology"/>
<feature type="chain" id="PRO_0000082085" description="ATP synthase subunit a">
    <location>
        <begin position="1"/>
        <end position="226"/>
    </location>
</feature>
<feature type="transmembrane region" description="Helical" evidence="1">
    <location>
        <begin position="18"/>
        <end position="38"/>
    </location>
</feature>
<feature type="transmembrane region" description="Helical" evidence="1">
    <location>
        <begin position="74"/>
        <end position="94"/>
    </location>
</feature>
<feature type="transmembrane region" description="Helical" evidence="1">
    <location>
        <begin position="100"/>
        <end position="120"/>
    </location>
</feature>
<feature type="transmembrane region" description="Helical" evidence="1">
    <location>
        <begin position="158"/>
        <end position="180"/>
    </location>
</feature>
<feature type="transmembrane region" description="Helical" evidence="1">
    <location>
        <begin position="197"/>
        <end position="217"/>
    </location>
</feature>